<name>KAD_YERPG</name>
<gene>
    <name evidence="1" type="primary">adk</name>
    <name type="ordered locus">YpAngola_A2894</name>
</gene>
<protein>
    <recommendedName>
        <fullName evidence="1">Adenylate kinase</fullName>
        <shortName evidence="1">AK</shortName>
        <ecNumber evidence="1">2.7.4.3</ecNumber>
    </recommendedName>
    <alternativeName>
        <fullName evidence="1">ATP-AMP transphosphorylase</fullName>
    </alternativeName>
    <alternativeName>
        <fullName evidence="1">ATP:AMP phosphotransferase</fullName>
    </alternativeName>
    <alternativeName>
        <fullName evidence="1">Adenylate monophosphate kinase</fullName>
    </alternativeName>
</protein>
<feature type="chain" id="PRO_1000100632" description="Adenylate kinase">
    <location>
        <begin position="1"/>
        <end position="214"/>
    </location>
</feature>
<feature type="region of interest" description="NMP" evidence="1">
    <location>
        <begin position="30"/>
        <end position="59"/>
    </location>
</feature>
<feature type="region of interest" description="LID">
    <location>
        <begin position="122"/>
        <end position="159"/>
    </location>
</feature>
<feature type="binding site" evidence="1">
    <location>
        <begin position="10"/>
        <end position="15"/>
    </location>
    <ligand>
        <name>ATP</name>
        <dbReference type="ChEBI" id="CHEBI:30616"/>
    </ligand>
</feature>
<feature type="binding site" evidence="1">
    <location>
        <position position="31"/>
    </location>
    <ligand>
        <name>AMP</name>
        <dbReference type="ChEBI" id="CHEBI:456215"/>
    </ligand>
</feature>
<feature type="binding site" evidence="1">
    <location>
        <position position="36"/>
    </location>
    <ligand>
        <name>AMP</name>
        <dbReference type="ChEBI" id="CHEBI:456215"/>
    </ligand>
</feature>
<feature type="binding site" evidence="1">
    <location>
        <begin position="57"/>
        <end position="59"/>
    </location>
    <ligand>
        <name>AMP</name>
        <dbReference type="ChEBI" id="CHEBI:456215"/>
    </ligand>
</feature>
<feature type="binding site" evidence="1">
    <location>
        <begin position="85"/>
        <end position="88"/>
    </location>
    <ligand>
        <name>AMP</name>
        <dbReference type="ChEBI" id="CHEBI:456215"/>
    </ligand>
</feature>
<feature type="binding site" evidence="1">
    <location>
        <position position="92"/>
    </location>
    <ligand>
        <name>AMP</name>
        <dbReference type="ChEBI" id="CHEBI:456215"/>
    </ligand>
</feature>
<feature type="binding site" evidence="1">
    <location>
        <position position="123"/>
    </location>
    <ligand>
        <name>ATP</name>
        <dbReference type="ChEBI" id="CHEBI:30616"/>
    </ligand>
</feature>
<feature type="binding site" evidence="1">
    <location>
        <begin position="132"/>
        <end position="133"/>
    </location>
    <ligand>
        <name>ATP</name>
        <dbReference type="ChEBI" id="CHEBI:30616"/>
    </ligand>
</feature>
<feature type="binding site" evidence="1">
    <location>
        <position position="156"/>
    </location>
    <ligand>
        <name>AMP</name>
        <dbReference type="ChEBI" id="CHEBI:456215"/>
    </ligand>
</feature>
<feature type="binding site" evidence="1">
    <location>
        <position position="167"/>
    </location>
    <ligand>
        <name>AMP</name>
        <dbReference type="ChEBI" id="CHEBI:456215"/>
    </ligand>
</feature>
<feature type="binding site" evidence="1">
    <location>
        <position position="200"/>
    </location>
    <ligand>
        <name>ATP</name>
        <dbReference type="ChEBI" id="CHEBI:30616"/>
    </ligand>
</feature>
<keyword id="KW-0067">ATP-binding</keyword>
<keyword id="KW-0963">Cytoplasm</keyword>
<keyword id="KW-0418">Kinase</keyword>
<keyword id="KW-0545">Nucleotide biosynthesis</keyword>
<keyword id="KW-0547">Nucleotide-binding</keyword>
<keyword id="KW-0808">Transferase</keyword>
<accession>A9R0Q7</accession>
<evidence type="ECO:0000255" key="1">
    <source>
        <dbReference type="HAMAP-Rule" id="MF_00235"/>
    </source>
</evidence>
<dbReference type="EC" id="2.7.4.3" evidence="1"/>
<dbReference type="EMBL" id="CP000901">
    <property type="protein sequence ID" value="ABX85861.1"/>
    <property type="molecule type" value="Genomic_DNA"/>
</dbReference>
<dbReference type="RefSeq" id="WP_002208600.1">
    <property type="nucleotide sequence ID" value="NZ_CP009935.1"/>
</dbReference>
<dbReference type="SMR" id="A9R0Q7"/>
<dbReference type="GeneID" id="57975593"/>
<dbReference type="KEGG" id="ypg:YpAngola_A2894"/>
<dbReference type="PATRIC" id="fig|349746.12.peg.3932"/>
<dbReference type="UniPathway" id="UPA00588">
    <property type="reaction ID" value="UER00649"/>
</dbReference>
<dbReference type="GO" id="GO:0005737">
    <property type="term" value="C:cytoplasm"/>
    <property type="evidence" value="ECO:0007669"/>
    <property type="project" value="UniProtKB-SubCell"/>
</dbReference>
<dbReference type="GO" id="GO:0004017">
    <property type="term" value="F:adenylate kinase activity"/>
    <property type="evidence" value="ECO:0007669"/>
    <property type="project" value="UniProtKB-UniRule"/>
</dbReference>
<dbReference type="GO" id="GO:0005524">
    <property type="term" value="F:ATP binding"/>
    <property type="evidence" value="ECO:0007669"/>
    <property type="project" value="UniProtKB-UniRule"/>
</dbReference>
<dbReference type="GO" id="GO:0044209">
    <property type="term" value="P:AMP salvage"/>
    <property type="evidence" value="ECO:0007669"/>
    <property type="project" value="UniProtKB-UniRule"/>
</dbReference>
<dbReference type="CDD" id="cd01428">
    <property type="entry name" value="ADK"/>
    <property type="match status" value="1"/>
</dbReference>
<dbReference type="FunFam" id="3.40.50.300:FF:000106">
    <property type="entry name" value="Adenylate kinase mitochondrial"/>
    <property type="match status" value="1"/>
</dbReference>
<dbReference type="Gene3D" id="3.40.50.300">
    <property type="entry name" value="P-loop containing nucleotide triphosphate hydrolases"/>
    <property type="match status" value="1"/>
</dbReference>
<dbReference type="HAMAP" id="MF_00235">
    <property type="entry name" value="Adenylate_kinase_Adk"/>
    <property type="match status" value="1"/>
</dbReference>
<dbReference type="InterPro" id="IPR006259">
    <property type="entry name" value="Adenyl_kin_sub"/>
</dbReference>
<dbReference type="InterPro" id="IPR000850">
    <property type="entry name" value="Adenylat/UMP-CMP_kin"/>
</dbReference>
<dbReference type="InterPro" id="IPR033690">
    <property type="entry name" value="Adenylat_kinase_CS"/>
</dbReference>
<dbReference type="InterPro" id="IPR007862">
    <property type="entry name" value="Adenylate_kinase_lid-dom"/>
</dbReference>
<dbReference type="InterPro" id="IPR027417">
    <property type="entry name" value="P-loop_NTPase"/>
</dbReference>
<dbReference type="NCBIfam" id="TIGR01351">
    <property type="entry name" value="adk"/>
    <property type="match status" value="1"/>
</dbReference>
<dbReference type="NCBIfam" id="NF001379">
    <property type="entry name" value="PRK00279.1-1"/>
    <property type="match status" value="1"/>
</dbReference>
<dbReference type="NCBIfam" id="NF001380">
    <property type="entry name" value="PRK00279.1-2"/>
    <property type="match status" value="1"/>
</dbReference>
<dbReference type="NCBIfam" id="NF001381">
    <property type="entry name" value="PRK00279.1-3"/>
    <property type="match status" value="1"/>
</dbReference>
<dbReference type="NCBIfam" id="NF011100">
    <property type="entry name" value="PRK14527.1"/>
    <property type="match status" value="1"/>
</dbReference>
<dbReference type="PANTHER" id="PTHR23359">
    <property type="entry name" value="NUCLEOTIDE KINASE"/>
    <property type="match status" value="1"/>
</dbReference>
<dbReference type="Pfam" id="PF00406">
    <property type="entry name" value="ADK"/>
    <property type="match status" value="1"/>
</dbReference>
<dbReference type="Pfam" id="PF05191">
    <property type="entry name" value="ADK_lid"/>
    <property type="match status" value="1"/>
</dbReference>
<dbReference type="PRINTS" id="PR00094">
    <property type="entry name" value="ADENYLTKNASE"/>
</dbReference>
<dbReference type="SUPFAM" id="SSF52540">
    <property type="entry name" value="P-loop containing nucleoside triphosphate hydrolases"/>
    <property type="match status" value="1"/>
</dbReference>
<dbReference type="PROSITE" id="PS00113">
    <property type="entry name" value="ADENYLATE_KINASE"/>
    <property type="match status" value="1"/>
</dbReference>
<sequence>MRIILLGAPGAGKGTQAQFIMEKYGIPQISTGDMLRAAVKAGSELGLKAKEIMDAGKLVTDELVIALVKERITQEDCRDGFLLDGFPRTIPQADAMKEAGIKVDYVLEFDVPDELIVERIVGRRVHAASGRVYHVKFNPPKVEDKDDVTGEELTIRKDDQEATVRKRLIEYHQQTAPLVSYYHKEADAGNTQYFKLDGTRNVAEVSAELATILG</sequence>
<comment type="function">
    <text evidence="1">Catalyzes the reversible transfer of the terminal phosphate group between ATP and AMP. Plays an important role in cellular energy homeostasis and in adenine nucleotide metabolism.</text>
</comment>
<comment type="catalytic activity">
    <reaction evidence="1">
        <text>AMP + ATP = 2 ADP</text>
        <dbReference type="Rhea" id="RHEA:12973"/>
        <dbReference type="ChEBI" id="CHEBI:30616"/>
        <dbReference type="ChEBI" id="CHEBI:456215"/>
        <dbReference type="ChEBI" id="CHEBI:456216"/>
        <dbReference type="EC" id="2.7.4.3"/>
    </reaction>
</comment>
<comment type="pathway">
    <text evidence="1">Purine metabolism; AMP biosynthesis via salvage pathway; AMP from ADP: step 1/1.</text>
</comment>
<comment type="subunit">
    <text evidence="1">Monomer.</text>
</comment>
<comment type="subcellular location">
    <subcellularLocation>
        <location evidence="1">Cytoplasm</location>
    </subcellularLocation>
</comment>
<comment type="domain">
    <text evidence="1">Consists of three domains, a large central CORE domain and two small peripheral domains, NMPbind and LID, which undergo movements during catalysis. The LID domain closes over the site of phosphoryl transfer upon ATP binding. Assembling and dissambling the active center during each catalytic cycle provides an effective means to prevent ATP hydrolysis.</text>
</comment>
<comment type="similarity">
    <text evidence="1">Belongs to the adenylate kinase family.</text>
</comment>
<organism>
    <name type="scientific">Yersinia pestis bv. Antiqua (strain Angola)</name>
    <dbReference type="NCBI Taxonomy" id="349746"/>
    <lineage>
        <taxon>Bacteria</taxon>
        <taxon>Pseudomonadati</taxon>
        <taxon>Pseudomonadota</taxon>
        <taxon>Gammaproteobacteria</taxon>
        <taxon>Enterobacterales</taxon>
        <taxon>Yersiniaceae</taxon>
        <taxon>Yersinia</taxon>
    </lineage>
</organism>
<proteinExistence type="inferred from homology"/>
<reference key="1">
    <citation type="journal article" date="2010" name="J. Bacteriol.">
        <title>Genome sequence of the deep-rooted Yersinia pestis strain Angola reveals new insights into the evolution and pangenome of the plague bacterium.</title>
        <authorList>
            <person name="Eppinger M."/>
            <person name="Worsham P.L."/>
            <person name="Nikolich M.P."/>
            <person name="Riley D.R."/>
            <person name="Sebastian Y."/>
            <person name="Mou S."/>
            <person name="Achtman M."/>
            <person name="Lindler L.E."/>
            <person name="Ravel J."/>
        </authorList>
    </citation>
    <scope>NUCLEOTIDE SEQUENCE [LARGE SCALE GENOMIC DNA]</scope>
    <source>
        <strain>Angola</strain>
    </source>
</reference>